<dbReference type="EMBL" id="L77117">
    <property type="protein sequence ID" value="AAB98066.1"/>
    <property type="molecule type" value="Genomic_DNA"/>
</dbReference>
<dbReference type="PIR" id="F64309">
    <property type="entry name" value="F64309"/>
</dbReference>
<dbReference type="RefSeq" id="WP_010869570.1">
    <property type="nucleotide sequence ID" value="NC_000909.1"/>
</dbReference>
<dbReference type="SMR" id="Q60385"/>
<dbReference type="FunCoup" id="Q60385">
    <property type="interactions" value="1"/>
</dbReference>
<dbReference type="STRING" id="243232.MJ_0078"/>
<dbReference type="PaxDb" id="243232-MJ_0078"/>
<dbReference type="EnsemblBacteria" id="AAB98066">
    <property type="protein sequence ID" value="AAB98066"/>
    <property type="gene ID" value="MJ_0078"/>
</dbReference>
<dbReference type="GeneID" id="1450917"/>
<dbReference type="KEGG" id="mja:MJ_0078"/>
<dbReference type="eggNOG" id="arCOG08278">
    <property type="taxonomic scope" value="Archaea"/>
</dbReference>
<dbReference type="HOGENOM" id="CLU_1313129_0_0_2"/>
<dbReference type="InParanoid" id="Q60385"/>
<dbReference type="OrthoDB" id="65988at2157"/>
<dbReference type="Proteomes" id="UP000000805">
    <property type="component" value="Chromosome"/>
</dbReference>
<dbReference type="InterPro" id="IPR016024">
    <property type="entry name" value="ARM-type_fold"/>
</dbReference>
<dbReference type="SUPFAM" id="SSF48371">
    <property type="entry name" value="ARM repeat"/>
    <property type="match status" value="1"/>
</dbReference>
<feature type="chain" id="PRO_0000106684" description="Uncharacterized protein MJ0078">
    <location>
        <begin position="1"/>
        <end position="207"/>
    </location>
</feature>
<organism>
    <name type="scientific">Methanocaldococcus jannaschii (strain ATCC 43067 / DSM 2661 / JAL-1 / JCM 10045 / NBRC 100440)</name>
    <name type="common">Methanococcus jannaschii</name>
    <dbReference type="NCBI Taxonomy" id="243232"/>
    <lineage>
        <taxon>Archaea</taxon>
        <taxon>Methanobacteriati</taxon>
        <taxon>Methanobacteriota</taxon>
        <taxon>Methanomada group</taxon>
        <taxon>Methanococci</taxon>
        <taxon>Methanococcales</taxon>
        <taxon>Methanocaldococcaceae</taxon>
        <taxon>Methanocaldococcus</taxon>
    </lineage>
</organism>
<accession>Q60385</accession>
<sequence length="207" mass="24563">MNCEEYRKKLKLNYGNREKLKVLKELYQMEVDEITKLNILDDVFELLTSTKERGFEDIISTHYTSDSKNKAIIYYCIKIIEKVGIKYPNLVYIYIPYLIKLLDSEFECIRFASAEALANIPSKLTIYAYPKLIKKLDNEVYAKVLVKLIMKSDNKEAILLKLFENFNEYSLYVIKELYKYDKELVYEFIPLILKEFGNNGLYSFLQK</sequence>
<keyword id="KW-1185">Reference proteome</keyword>
<protein>
    <recommendedName>
        <fullName>Uncharacterized protein MJ0078</fullName>
    </recommendedName>
</protein>
<name>Y078_METJA</name>
<proteinExistence type="predicted"/>
<reference key="1">
    <citation type="journal article" date="1996" name="Science">
        <title>Complete genome sequence of the methanogenic archaeon, Methanococcus jannaschii.</title>
        <authorList>
            <person name="Bult C.J."/>
            <person name="White O."/>
            <person name="Olsen G.J."/>
            <person name="Zhou L."/>
            <person name="Fleischmann R.D."/>
            <person name="Sutton G.G."/>
            <person name="Blake J.A."/>
            <person name="FitzGerald L.M."/>
            <person name="Clayton R.A."/>
            <person name="Gocayne J.D."/>
            <person name="Kerlavage A.R."/>
            <person name="Dougherty B.A."/>
            <person name="Tomb J.-F."/>
            <person name="Adams M.D."/>
            <person name="Reich C.I."/>
            <person name="Overbeek R."/>
            <person name="Kirkness E.F."/>
            <person name="Weinstock K.G."/>
            <person name="Merrick J.M."/>
            <person name="Glodek A."/>
            <person name="Scott J.L."/>
            <person name="Geoghagen N.S.M."/>
            <person name="Weidman J.F."/>
            <person name="Fuhrmann J.L."/>
            <person name="Nguyen D."/>
            <person name="Utterback T.R."/>
            <person name="Kelley J.M."/>
            <person name="Peterson J.D."/>
            <person name="Sadow P.W."/>
            <person name="Hanna M.C."/>
            <person name="Cotton M.D."/>
            <person name="Roberts K.M."/>
            <person name="Hurst M.A."/>
            <person name="Kaine B.P."/>
            <person name="Borodovsky M."/>
            <person name="Klenk H.-P."/>
            <person name="Fraser C.M."/>
            <person name="Smith H.O."/>
            <person name="Woese C.R."/>
            <person name="Venter J.C."/>
        </authorList>
    </citation>
    <scope>NUCLEOTIDE SEQUENCE [LARGE SCALE GENOMIC DNA]</scope>
    <source>
        <strain>ATCC 43067 / DSM 2661 / JAL-1 / JCM 10045 / NBRC 100440</strain>
    </source>
</reference>
<gene>
    <name type="ordered locus">MJ0078</name>
</gene>